<sequence>MNALTAVQNNAVDSGQDYSGFTLIPSAQSPRLLELTFTEQTTNRFLEQVAEWPVQALEYKSFLRFRVGKILDDLCANQLQPLLLKTLLNRAEGALLINAVGIDDVAQADEMVKLATAVAHLIGRSNFDAMSGQYYARFVVKNVDNSDSYLRQPHRVMELHNDGTYVEEITDYVLMMKIDEQNMQGGNSLLLHLDDWEHLDHFFRHPLARRPMRFAAPPSKNVSKDVFHPVFDVDQQGRPVMRYIDQFVQPKDFEEGVWLSELSDAIETSKGILSVPVPVGKFLLINNLFWLHGRDRFTPHPDLRRELMRQRGYFAYATHHYQTHQ</sequence>
<feature type="chain" id="PRO_1000064810" description="Glutarate 2-hydroxylase">
    <location>
        <begin position="1"/>
        <end position="325"/>
    </location>
</feature>
<feature type="binding site" evidence="1">
    <location>
        <position position="160"/>
    </location>
    <ligand>
        <name>Fe cation</name>
        <dbReference type="ChEBI" id="CHEBI:24875"/>
    </ligand>
</feature>
<feature type="binding site" evidence="1">
    <location>
        <position position="162"/>
    </location>
    <ligand>
        <name>Fe cation</name>
        <dbReference type="ChEBI" id="CHEBI:24875"/>
    </ligand>
</feature>
<feature type="binding site" evidence="1">
    <location>
        <position position="292"/>
    </location>
    <ligand>
        <name>Fe cation</name>
        <dbReference type="ChEBI" id="CHEBI:24875"/>
    </ligand>
</feature>
<dbReference type="EC" id="1.14.11.64" evidence="1"/>
<dbReference type="EMBL" id="CP000243">
    <property type="protein sequence ID" value="ABE08470.1"/>
    <property type="molecule type" value="Genomic_DNA"/>
</dbReference>
<dbReference type="RefSeq" id="WP_000993117.1">
    <property type="nucleotide sequence ID" value="NZ_CP064825.1"/>
</dbReference>
<dbReference type="SMR" id="Q1R844"/>
<dbReference type="KEGG" id="eci:UTI89_C3014"/>
<dbReference type="HOGENOM" id="CLU_075277_0_0_6"/>
<dbReference type="Proteomes" id="UP000001952">
    <property type="component" value="Chromosome"/>
</dbReference>
<dbReference type="GO" id="GO:0008198">
    <property type="term" value="F:ferrous iron binding"/>
    <property type="evidence" value="ECO:0007669"/>
    <property type="project" value="UniProtKB-UniRule"/>
</dbReference>
<dbReference type="GO" id="GO:0106343">
    <property type="term" value="F:glutarate dioxygenase activity"/>
    <property type="evidence" value="ECO:0007669"/>
    <property type="project" value="UniProtKB-EC"/>
</dbReference>
<dbReference type="GO" id="GO:0050498">
    <property type="term" value="F:oxidoreductase activity, acting on paired donors, with incorporation or reduction of molecular oxygen, with 2-oxoglutarate as one donor, and the other dehydrogenated"/>
    <property type="evidence" value="ECO:0007669"/>
    <property type="project" value="UniProtKB-UniRule"/>
</dbReference>
<dbReference type="GO" id="GO:0019477">
    <property type="term" value="P:L-lysine catabolic process"/>
    <property type="evidence" value="ECO:0007669"/>
    <property type="project" value="UniProtKB-UniRule"/>
</dbReference>
<dbReference type="CDD" id="cd00250">
    <property type="entry name" value="CAS_like"/>
    <property type="match status" value="1"/>
</dbReference>
<dbReference type="FunFam" id="3.60.130.10:FF:000004">
    <property type="entry name" value="Glutarate 2-hydroxylase"/>
    <property type="match status" value="1"/>
</dbReference>
<dbReference type="Gene3D" id="3.60.130.10">
    <property type="entry name" value="Clavaminate synthase-like"/>
    <property type="match status" value="1"/>
</dbReference>
<dbReference type="HAMAP" id="MF_01083">
    <property type="entry name" value="glutarate_hydroxylase"/>
    <property type="match status" value="1"/>
</dbReference>
<dbReference type="InterPro" id="IPR015038">
    <property type="entry name" value="GlaH"/>
</dbReference>
<dbReference type="InterPro" id="IPR042098">
    <property type="entry name" value="TauD-like_sf"/>
</dbReference>
<dbReference type="NCBIfam" id="NF002814">
    <property type="entry name" value="PRK02963.1"/>
    <property type="match status" value="1"/>
</dbReference>
<dbReference type="Pfam" id="PF08943">
    <property type="entry name" value="CsiD"/>
    <property type="match status" value="1"/>
</dbReference>
<dbReference type="SUPFAM" id="SSF51197">
    <property type="entry name" value="Clavaminate synthase-like"/>
    <property type="match status" value="1"/>
</dbReference>
<keyword id="KW-0223">Dioxygenase</keyword>
<keyword id="KW-0408">Iron</keyword>
<keyword id="KW-0479">Metal-binding</keyword>
<keyword id="KW-0560">Oxidoreductase</keyword>
<comment type="function">
    <text evidence="1">Acts as an alpha-ketoglutarate-dependent dioxygenase catalyzing hydroxylation of glutarate (GA) to L-2-hydroxyglutarate (L2HG). Functions in a L-lysine degradation pathway that proceeds via cadaverine, glutarate and L-2-hydroxyglutarate.</text>
</comment>
<comment type="catalytic activity">
    <reaction evidence="1">
        <text>glutarate + 2-oxoglutarate + O2 = (S)-2-hydroxyglutarate + succinate + CO2</text>
        <dbReference type="Rhea" id="RHEA:13821"/>
        <dbReference type="ChEBI" id="CHEBI:15379"/>
        <dbReference type="ChEBI" id="CHEBI:16526"/>
        <dbReference type="ChEBI" id="CHEBI:16782"/>
        <dbReference type="ChEBI" id="CHEBI:16810"/>
        <dbReference type="ChEBI" id="CHEBI:30031"/>
        <dbReference type="ChEBI" id="CHEBI:30921"/>
        <dbReference type="EC" id="1.14.11.64"/>
    </reaction>
    <physiologicalReaction direction="left-to-right" evidence="1">
        <dbReference type="Rhea" id="RHEA:13822"/>
    </physiologicalReaction>
</comment>
<comment type="cofactor">
    <cofactor evidence="1">
        <name>Fe(2+)</name>
        <dbReference type="ChEBI" id="CHEBI:29033"/>
    </cofactor>
    <text evidence="1">Binds 1 Fe(2+) ion per subunit.</text>
</comment>
<comment type="pathway">
    <text evidence="1">Amino-acid degradation.</text>
</comment>
<comment type="subunit">
    <text evidence="1">Homotetramer.</text>
</comment>
<comment type="similarity">
    <text evidence="1">Belongs to the glutarate hydroxylase family.</text>
</comment>
<name>GLAH_ECOUT</name>
<accession>Q1R844</accession>
<evidence type="ECO:0000255" key="1">
    <source>
        <dbReference type="HAMAP-Rule" id="MF_01083"/>
    </source>
</evidence>
<organism>
    <name type="scientific">Escherichia coli (strain UTI89 / UPEC)</name>
    <dbReference type="NCBI Taxonomy" id="364106"/>
    <lineage>
        <taxon>Bacteria</taxon>
        <taxon>Pseudomonadati</taxon>
        <taxon>Pseudomonadota</taxon>
        <taxon>Gammaproteobacteria</taxon>
        <taxon>Enterobacterales</taxon>
        <taxon>Enterobacteriaceae</taxon>
        <taxon>Escherichia</taxon>
    </lineage>
</organism>
<proteinExistence type="inferred from homology"/>
<protein>
    <recommendedName>
        <fullName evidence="1">Glutarate 2-hydroxylase</fullName>
        <shortName evidence="1">G-2-H</shortName>
        <ecNumber evidence="1">1.14.11.64</ecNumber>
    </recommendedName>
</protein>
<gene>
    <name evidence="1" type="primary">glaH</name>
    <name type="ordered locus">UTI89_C3014</name>
</gene>
<reference key="1">
    <citation type="journal article" date="2006" name="Proc. Natl. Acad. Sci. U.S.A.">
        <title>Identification of genes subject to positive selection in uropathogenic strains of Escherichia coli: a comparative genomics approach.</title>
        <authorList>
            <person name="Chen S.L."/>
            <person name="Hung C.-S."/>
            <person name="Xu J."/>
            <person name="Reigstad C.S."/>
            <person name="Magrini V."/>
            <person name="Sabo A."/>
            <person name="Blasiar D."/>
            <person name="Bieri T."/>
            <person name="Meyer R.R."/>
            <person name="Ozersky P."/>
            <person name="Armstrong J.R."/>
            <person name="Fulton R.S."/>
            <person name="Latreille J.P."/>
            <person name="Spieth J."/>
            <person name="Hooton T.M."/>
            <person name="Mardis E.R."/>
            <person name="Hultgren S.J."/>
            <person name="Gordon J.I."/>
        </authorList>
    </citation>
    <scope>NUCLEOTIDE SEQUENCE [LARGE SCALE GENOMIC DNA]</scope>
    <source>
        <strain>UTI89 / UPEC</strain>
    </source>
</reference>